<dbReference type="EMBL" id="CP001107">
    <property type="protein sequence ID" value="ACR74132.1"/>
    <property type="molecule type" value="Genomic_DNA"/>
</dbReference>
<dbReference type="RefSeq" id="WP_012741253.1">
    <property type="nucleotide sequence ID" value="NZ_CAXSYD010000024.1"/>
</dbReference>
<dbReference type="SMR" id="C4ZB57"/>
<dbReference type="STRING" id="515619.EUBREC_0329"/>
<dbReference type="PaxDb" id="515619-EUBREC_0329"/>
<dbReference type="KEGG" id="ere:EUBREC_0329"/>
<dbReference type="HOGENOM" id="CLU_140930_1_0_9"/>
<dbReference type="Proteomes" id="UP000001477">
    <property type="component" value="Chromosome"/>
</dbReference>
<dbReference type="GO" id="GO:0043590">
    <property type="term" value="C:bacterial nucleoid"/>
    <property type="evidence" value="ECO:0007669"/>
    <property type="project" value="UniProtKB-UniRule"/>
</dbReference>
<dbReference type="GO" id="GO:0005829">
    <property type="term" value="C:cytosol"/>
    <property type="evidence" value="ECO:0007669"/>
    <property type="project" value="TreeGrafter"/>
</dbReference>
<dbReference type="GO" id="GO:0003677">
    <property type="term" value="F:DNA binding"/>
    <property type="evidence" value="ECO:0007669"/>
    <property type="project" value="UniProtKB-UniRule"/>
</dbReference>
<dbReference type="Gene3D" id="3.30.1310.10">
    <property type="entry name" value="Nucleoid-associated protein YbaB-like domain"/>
    <property type="match status" value="1"/>
</dbReference>
<dbReference type="HAMAP" id="MF_00274">
    <property type="entry name" value="DNA_YbaB_EbfC"/>
    <property type="match status" value="1"/>
</dbReference>
<dbReference type="InterPro" id="IPR036894">
    <property type="entry name" value="YbaB-like_sf"/>
</dbReference>
<dbReference type="InterPro" id="IPR004401">
    <property type="entry name" value="YbaB/EbfC"/>
</dbReference>
<dbReference type="NCBIfam" id="TIGR00103">
    <property type="entry name" value="DNA_YbaB_EbfC"/>
    <property type="match status" value="1"/>
</dbReference>
<dbReference type="PANTHER" id="PTHR33449">
    <property type="entry name" value="NUCLEOID-ASSOCIATED PROTEIN YBAB"/>
    <property type="match status" value="1"/>
</dbReference>
<dbReference type="PANTHER" id="PTHR33449:SF1">
    <property type="entry name" value="NUCLEOID-ASSOCIATED PROTEIN YBAB"/>
    <property type="match status" value="1"/>
</dbReference>
<dbReference type="Pfam" id="PF02575">
    <property type="entry name" value="YbaB_DNA_bd"/>
    <property type="match status" value="1"/>
</dbReference>
<dbReference type="PIRSF" id="PIRSF004555">
    <property type="entry name" value="UCP004555"/>
    <property type="match status" value="1"/>
</dbReference>
<dbReference type="SUPFAM" id="SSF82607">
    <property type="entry name" value="YbaB-like"/>
    <property type="match status" value="1"/>
</dbReference>
<feature type="chain" id="PRO_1000204769" description="Nucleoid-associated protein EUBREC_0329">
    <location>
        <begin position="1"/>
        <end position="113"/>
    </location>
</feature>
<feature type="region of interest" description="Disordered" evidence="2">
    <location>
        <begin position="1"/>
        <end position="45"/>
    </location>
</feature>
<feature type="compositionally biased region" description="Gly residues" evidence="2">
    <location>
        <begin position="1"/>
        <end position="12"/>
    </location>
</feature>
<feature type="compositionally biased region" description="Basic and acidic residues" evidence="2">
    <location>
        <begin position="27"/>
        <end position="37"/>
    </location>
</feature>
<sequence length="113" mass="12099">MARRGGFPGGMPGNMNNLMKQAQKMQRQMEEAQKQLEDAEVTAKAGGGAVEVTVSGKKEITKVKLSEEVVDPDDIEMLEDLIMAATNEALRQIDEQSQASMSKITGGLGGGLF</sequence>
<proteinExistence type="inferred from homology"/>
<evidence type="ECO:0000255" key="1">
    <source>
        <dbReference type="HAMAP-Rule" id="MF_00274"/>
    </source>
</evidence>
<evidence type="ECO:0000256" key="2">
    <source>
        <dbReference type="SAM" id="MobiDB-lite"/>
    </source>
</evidence>
<protein>
    <recommendedName>
        <fullName evidence="1">Nucleoid-associated protein EUBREC_0329</fullName>
    </recommendedName>
</protein>
<accession>C4ZB57</accession>
<gene>
    <name type="ordered locus">EUBREC_0329</name>
</gene>
<organism>
    <name type="scientific">Agathobacter rectalis (strain ATCC 33656 / DSM 3377 / JCM 17463 / KCTC 5835 / VPI 0990)</name>
    <name type="common">Eubacterium rectale</name>
    <dbReference type="NCBI Taxonomy" id="515619"/>
    <lineage>
        <taxon>Bacteria</taxon>
        <taxon>Bacillati</taxon>
        <taxon>Bacillota</taxon>
        <taxon>Clostridia</taxon>
        <taxon>Lachnospirales</taxon>
        <taxon>Lachnospiraceae</taxon>
        <taxon>Agathobacter</taxon>
    </lineage>
</organism>
<comment type="function">
    <text evidence="1">Binds to DNA and alters its conformation. May be involved in regulation of gene expression, nucleoid organization and DNA protection.</text>
</comment>
<comment type="subunit">
    <text evidence="1">Homodimer.</text>
</comment>
<comment type="subcellular location">
    <subcellularLocation>
        <location evidence="1">Cytoplasm</location>
        <location evidence="1">Nucleoid</location>
    </subcellularLocation>
</comment>
<comment type="similarity">
    <text evidence="1">Belongs to the YbaB/EbfC family.</text>
</comment>
<name>Y329_AGARV</name>
<reference key="1">
    <citation type="journal article" date="2009" name="Proc. Natl. Acad. Sci. U.S.A.">
        <title>Characterizing a model human gut microbiota composed of members of its two dominant bacterial phyla.</title>
        <authorList>
            <person name="Mahowald M.A."/>
            <person name="Rey F.E."/>
            <person name="Seedorf H."/>
            <person name="Turnbaugh P.J."/>
            <person name="Fulton R.S."/>
            <person name="Wollam A."/>
            <person name="Shah N."/>
            <person name="Wang C."/>
            <person name="Magrini V."/>
            <person name="Wilson R.K."/>
            <person name="Cantarel B.L."/>
            <person name="Coutinho P.M."/>
            <person name="Henrissat B."/>
            <person name="Crock L.W."/>
            <person name="Russell A."/>
            <person name="Verberkmoes N.C."/>
            <person name="Hettich R.L."/>
            <person name="Gordon J.I."/>
        </authorList>
    </citation>
    <scope>NUCLEOTIDE SEQUENCE [LARGE SCALE GENOMIC DNA]</scope>
    <source>
        <strain>ATCC 33656 / DSM 3377 / JCM 17463 / KCTC 5835 / LMG 30912 / VPI 0990</strain>
    </source>
</reference>
<keyword id="KW-0963">Cytoplasm</keyword>
<keyword id="KW-0238">DNA-binding</keyword>